<sequence length="44" mass="4695">MRYVASYLLAALGGNSSPSAKDIKKILDSVGIEADDDRLNKVIS</sequence>
<keyword id="KW-0007">Acetylation</keyword>
<keyword id="KW-0903">Direct protein sequencing</keyword>
<keyword id="KW-0597">Phosphoprotein</keyword>
<keyword id="KW-1185">Reference proteome</keyword>
<keyword id="KW-0687">Ribonucleoprotein</keyword>
<keyword id="KW-0689">Ribosomal protein</keyword>
<proteinExistence type="evidence at protein level"/>
<accession>P19943</accession>
<organism>
    <name type="scientific">Oryctolagus cuniculus</name>
    <name type="common">Rabbit</name>
    <dbReference type="NCBI Taxonomy" id="9986"/>
    <lineage>
        <taxon>Eukaryota</taxon>
        <taxon>Metazoa</taxon>
        <taxon>Chordata</taxon>
        <taxon>Craniata</taxon>
        <taxon>Vertebrata</taxon>
        <taxon>Euteleostomi</taxon>
        <taxon>Mammalia</taxon>
        <taxon>Eutheria</taxon>
        <taxon>Euarchontoglires</taxon>
        <taxon>Glires</taxon>
        <taxon>Lagomorpha</taxon>
        <taxon>Leporidae</taxon>
        <taxon>Oryctolagus</taxon>
    </lineage>
</organism>
<gene>
    <name type="primary">RPLP2</name>
</gene>
<reference key="1">
    <citation type="journal article" date="1987" name="Eur. J. Biochem.">
        <title>5S-rRNA-containing ribonucleoproteins from rabbit muscle and liver. Complex and partial primary structures.</title>
        <authorList>
            <person name="Nendza R."/>
            <person name="Digweed M."/>
            <person name="Meyer H.E."/>
            <person name="Erdmann V.A."/>
            <person name="Mayr G.W."/>
        </authorList>
    </citation>
    <scope>PROTEIN SEQUENCE</scope>
</reference>
<name>RLA2_RABIT</name>
<dbReference type="PIR" id="S00179">
    <property type="entry name" value="S00179"/>
</dbReference>
<dbReference type="BMRB" id="P19943"/>
<dbReference type="SMR" id="P19943"/>
<dbReference type="STRING" id="9986.ENSOCUP00000016850"/>
<dbReference type="PaxDb" id="9986-ENSOCUP00000016850"/>
<dbReference type="InParanoid" id="P19943"/>
<dbReference type="Proteomes" id="UP000001811">
    <property type="component" value="Unplaced"/>
</dbReference>
<dbReference type="GO" id="GO:0022625">
    <property type="term" value="C:cytosolic large ribosomal subunit"/>
    <property type="evidence" value="ECO:0007669"/>
    <property type="project" value="InterPro"/>
</dbReference>
<dbReference type="GO" id="GO:0003735">
    <property type="term" value="F:structural constituent of ribosome"/>
    <property type="evidence" value="ECO:0007669"/>
    <property type="project" value="InterPro"/>
</dbReference>
<dbReference type="GO" id="GO:0002182">
    <property type="term" value="P:cytoplasmic translational elongation"/>
    <property type="evidence" value="ECO:0007669"/>
    <property type="project" value="InterPro"/>
</dbReference>
<dbReference type="CDD" id="cd05833">
    <property type="entry name" value="Ribosomal_P2"/>
    <property type="match status" value="1"/>
</dbReference>
<dbReference type="FunFam" id="1.10.10.1410:FF:000002">
    <property type="entry name" value="60S acidic ribosomal protein P2"/>
    <property type="match status" value="1"/>
</dbReference>
<dbReference type="Gene3D" id="1.10.10.1410">
    <property type="match status" value="1"/>
</dbReference>
<dbReference type="InterPro" id="IPR038716">
    <property type="entry name" value="P1/P2_N_sf"/>
</dbReference>
<dbReference type="InterPro" id="IPR044076">
    <property type="entry name" value="Ribosomal_P2"/>
</dbReference>
<dbReference type="PANTHER" id="PTHR21141">
    <property type="entry name" value="60S ACIDIC RIBOSOMAL PROTEIN FAMILY MEMBER"/>
    <property type="match status" value="1"/>
</dbReference>
<dbReference type="PANTHER" id="PTHR21141:SF5">
    <property type="entry name" value="LARGE RIBOSOMAL SUBUNIT PROTEIN P2"/>
    <property type="match status" value="1"/>
</dbReference>
<feature type="chain" id="PRO_0000157643" description="Large ribosomal subunit protein P2">
    <location>
        <begin position="1"/>
        <end position="44" status="greater than"/>
    </location>
</feature>
<feature type="modified residue" description="N-acetylmethionine" evidence="2">
    <location>
        <position position="1"/>
    </location>
</feature>
<feature type="modified residue" description="Phosphoserine" evidence="2">
    <location>
        <position position="17"/>
    </location>
</feature>
<feature type="modified residue" description="Phosphoserine" evidence="2">
    <location>
        <position position="19"/>
    </location>
</feature>
<feature type="modified residue" description="N6-acetyllysine; alternate" evidence="2">
    <location>
        <position position="21"/>
    </location>
</feature>
<feature type="modified residue" description="N6-succinyllysine; alternate" evidence="3">
    <location>
        <position position="21"/>
    </location>
</feature>
<feature type="non-terminal residue">
    <location>
        <position position="44"/>
    </location>
</feature>
<protein>
    <recommendedName>
        <fullName evidence="4">Large ribosomal subunit protein P2</fullName>
    </recommendedName>
    <alternativeName>
        <fullName>60S acidic ribosomal protein P2</fullName>
    </alternativeName>
    <alternativeName>
        <fullName>Acidic phosphoprotein P3</fullName>
    </alternativeName>
</protein>
<evidence type="ECO:0000250" key="1"/>
<evidence type="ECO:0000250" key="2">
    <source>
        <dbReference type="UniProtKB" id="P05387"/>
    </source>
</evidence>
<evidence type="ECO:0000250" key="3">
    <source>
        <dbReference type="UniProtKB" id="P99027"/>
    </source>
</evidence>
<evidence type="ECO:0000305" key="4"/>
<comment type="function">
    <text>Plays an important role in the elongation step of protein synthesis.</text>
</comment>
<comment type="subunit">
    <text evidence="1">Heterodimer with RPLP1 at the lateral ribosomal stalk of the large ribosomal subunit.</text>
</comment>
<comment type="PTM">
    <text>Phosphorylated.</text>
</comment>
<comment type="similarity">
    <text evidence="4">Belongs to the eukaryotic ribosomal protein P1/P2 family.</text>
</comment>